<proteinExistence type="inferred from homology"/>
<sequence length="859" mass="96668">MNGLCCCTPCKPRYRRLVDSIYPRAVTDGLLYSNMQKLTFYAISHPEKLERIGEYLVMRMVRDLSRQRPVQVKIAVEAMDQLLQACHSSPSLPQFSENHLRMVQRLLESNNAKMEQLATDSFVTFSNIEESSPSYHRQYDFFIDKFSQMCHANPQAAYGDDFRLARCAGLRGLRGVVWKSVTDDLHPNIWEQQHMDKIVPSILFNLQEPDDSGKGFSSSQIPKFDNTFADSTQSHRVDDEATPKVLSDRCLRELMGKASFGSLRAVIEPVLKHMDLHKRWTPPPSFAIHVFRAIIYSIQSQNSYFVIQELINHLDSMCSADASTRIGIATVLSSIVSIAGTSIGPLLLSIFNSLLKHLRTSVDFERSGKCSDQPAEKMYQEALINAMGDFANALPDYQKVEMMMFTVGNIPNLDERKSKQGDEFLQHVLVKTLLKVATKYRTAYLATVFTDSFLDTLLLLALVRDPQVRLATQQIFHTLLDRHDNAANLVHLGYELDVSDVQLTVEKCSRADQMFMRKHIGEITYMLLRAVALADENDLNKHIDAVLCTMSLLCIESLIELFRLSLALQQLALDSKQNFSDAKRNCIHNMVAKYLNLSAQLIANPSLCQQVQHVVSCRAQRGIPGLNLLLNVKDSPNNDDPLSSSALNSTSQGATTITEEDQTLLFNAEDIAESLKASGKDATRLFVPFNFNMNGRKNDGSGDQWQNDTPNFDSTDGRESPSGYKTVGIDDVSVDMSVDWTPPVSRKQSRRNTIFSIVNPPKLNASTVDDLKAYANATFDPIEEGRKEKELTGSILSEIRNTDFEERVNTNESLNEKSDLSKSIARLLVRNGEMTRVRDIGRPAKPKNLFEIELPSFAY</sequence>
<gene>
    <name evidence="3" type="primary">efr-3</name>
    <name evidence="3" type="ORF">C32D5.3</name>
</gene>
<organism>
    <name type="scientific">Caenorhabditis elegans</name>
    <dbReference type="NCBI Taxonomy" id="6239"/>
    <lineage>
        <taxon>Eukaryota</taxon>
        <taxon>Metazoa</taxon>
        <taxon>Ecdysozoa</taxon>
        <taxon>Nematoda</taxon>
        <taxon>Chromadorea</taxon>
        <taxon>Rhabditida</taxon>
        <taxon>Rhabditina</taxon>
        <taxon>Rhabditomorpha</taxon>
        <taxon>Rhabditoidea</taxon>
        <taxon>Rhabditidae</taxon>
        <taxon>Peloderinae</taxon>
        <taxon>Caenorhabditis</taxon>
    </lineage>
</organism>
<accession>Q09263</accession>
<feature type="chain" id="PRO_0000065215" description="Protein EFR3 homolog">
    <location>
        <begin position="1"/>
        <end position="859"/>
    </location>
</feature>
<feature type="region of interest" description="Disordered" evidence="1">
    <location>
        <begin position="696"/>
        <end position="728"/>
    </location>
</feature>
<feature type="compositionally biased region" description="Polar residues" evidence="1">
    <location>
        <begin position="696"/>
        <end position="714"/>
    </location>
</feature>
<keyword id="KW-1185">Reference proteome</keyword>
<name>EFR3_CAEEL</name>
<comment type="similarity">
    <text evidence="2">Belongs to the EFR3 family.</text>
</comment>
<evidence type="ECO:0000256" key="1">
    <source>
        <dbReference type="SAM" id="MobiDB-lite"/>
    </source>
</evidence>
<evidence type="ECO:0000305" key="2"/>
<evidence type="ECO:0000312" key="3">
    <source>
        <dbReference type="WormBase" id="C32D5.3"/>
    </source>
</evidence>
<protein>
    <recommendedName>
        <fullName>Protein EFR3 homolog</fullName>
    </recommendedName>
</protein>
<dbReference type="EMBL" id="BX284602">
    <property type="protein sequence ID" value="CCD66029.1"/>
    <property type="molecule type" value="Genomic_DNA"/>
</dbReference>
<dbReference type="PIR" id="T15732">
    <property type="entry name" value="T15732"/>
</dbReference>
<dbReference type="RefSeq" id="NP_495269.1">
    <property type="nucleotide sequence ID" value="NM_062868.6"/>
</dbReference>
<dbReference type="FunCoup" id="Q09263">
    <property type="interactions" value="2885"/>
</dbReference>
<dbReference type="STRING" id="6239.C32D5.3.1"/>
<dbReference type="iPTMnet" id="Q09263"/>
<dbReference type="PaxDb" id="6239-C32D5.3.1"/>
<dbReference type="PeptideAtlas" id="Q09263"/>
<dbReference type="EnsemblMetazoa" id="C32D5.3.1">
    <property type="protein sequence ID" value="C32D5.3.1"/>
    <property type="gene ID" value="WBGene00016311"/>
</dbReference>
<dbReference type="EnsemblMetazoa" id="C32D5.3.2">
    <property type="protein sequence ID" value="C32D5.3.2"/>
    <property type="gene ID" value="WBGene00016311"/>
</dbReference>
<dbReference type="GeneID" id="174042"/>
<dbReference type="KEGG" id="cel:CELE_C32D5.3"/>
<dbReference type="UCSC" id="C32D5.3">
    <property type="organism name" value="c. elegans"/>
</dbReference>
<dbReference type="AGR" id="WB:WBGene00016311"/>
<dbReference type="CTD" id="174042"/>
<dbReference type="WormBase" id="C32D5.3">
    <property type="protein sequence ID" value="CE01843"/>
    <property type="gene ID" value="WBGene00016311"/>
    <property type="gene designation" value="efr-3"/>
</dbReference>
<dbReference type="eggNOG" id="KOG1877">
    <property type="taxonomic scope" value="Eukaryota"/>
</dbReference>
<dbReference type="GeneTree" id="ENSGT00390000002143"/>
<dbReference type="HOGENOM" id="CLU_012674_2_0_1"/>
<dbReference type="InParanoid" id="Q09263"/>
<dbReference type="OMA" id="QMCHANP"/>
<dbReference type="OrthoDB" id="19232at2759"/>
<dbReference type="PhylomeDB" id="Q09263"/>
<dbReference type="PRO" id="PR:Q09263"/>
<dbReference type="Proteomes" id="UP000001940">
    <property type="component" value="Chromosome II"/>
</dbReference>
<dbReference type="Bgee" id="WBGene00016311">
    <property type="expression patterns" value="Expressed in germ line (C elegans) and 4 other cell types or tissues"/>
</dbReference>
<dbReference type="GO" id="GO:0005886">
    <property type="term" value="C:plasma membrane"/>
    <property type="evidence" value="ECO:0000318"/>
    <property type="project" value="GO_Central"/>
</dbReference>
<dbReference type="GO" id="GO:0072659">
    <property type="term" value="P:protein localization to plasma membrane"/>
    <property type="evidence" value="ECO:0000318"/>
    <property type="project" value="GO_Central"/>
</dbReference>
<dbReference type="InterPro" id="IPR016024">
    <property type="entry name" value="ARM-type_fold"/>
</dbReference>
<dbReference type="InterPro" id="IPR049152">
    <property type="entry name" value="EFR3-like_ARM"/>
</dbReference>
<dbReference type="InterPro" id="IPR051851">
    <property type="entry name" value="EFR3_Homologs"/>
</dbReference>
<dbReference type="PANTHER" id="PTHR12444">
    <property type="entry name" value="PROTEIN EFR3 HOMOLOG CMP44E"/>
    <property type="match status" value="1"/>
</dbReference>
<dbReference type="PANTHER" id="PTHR12444:SF8">
    <property type="entry name" value="PROTEIN EFR3 HOMOLOG CMP44E"/>
    <property type="match status" value="1"/>
</dbReference>
<dbReference type="Pfam" id="PF21052">
    <property type="entry name" value="EFR3_ARM"/>
    <property type="match status" value="1"/>
</dbReference>
<dbReference type="SUPFAM" id="SSF48371">
    <property type="entry name" value="ARM repeat"/>
    <property type="match status" value="1"/>
</dbReference>
<reference key="1">
    <citation type="journal article" date="1998" name="Science">
        <title>Genome sequence of the nematode C. elegans: a platform for investigating biology.</title>
        <authorList>
            <consortium name="The C. elegans sequencing consortium"/>
        </authorList>
    </citation>
    <scope>NUCLEOTIDE SEQUENCE [LARGE SCALE GENOMIC DNA]</scope>
    <source>
        <strain>Bristol N2</strain>
    </source>
</reference>